<gene>
    <name evidence="3" type="primary">aiiA</name>
</gene>
<comment type="function">
    <text evidence="1">Catalyzes hydrolysis of N-hexanoyl-(S)-homoserine lactone, but not the R-enantiomer. Hydrolyzes short- and long-chain N-acyl homoserine lactones with or without 3-oxo substitution at C3, has maximum activity on C10-AHL (By similarity).</text>
</comment>
<comment type="catalytic activity">
    <reaction evidence="1">
        <text>an N-acyl-L-homoserine lactone + H2O = an N-acyl-L-homoserine + H(+)</text>
        <dbReference type="Rhea" id="RHEA:22576"/>
        <dbReference type="ChEBI" id="CHEBI:15377"/>
        <dbReference type="ChEBI" id="CHEBI:15378"/>
        <dbReference type="ChEBI" id="CHEBI:55474"/>
        <dbReference type="ChEBI" id="CHEBI:58921"/>
        <dbReference type="EC" id="3.1.1.81"/>
    </reaction>
</comment>
<comment type="cofactor">
    <cofactor evidence="1">
        <name>Zn(2+)</name>
        <dbReference type="ChEBI" id="CHEBI:29105"/>
    </cofactor>
    <text evidence="1">Binds 2 Zn(2+) ions per subunit.</text>
</comment>
<comment type="subunit">
    <text evidence="1">Monomer.</text>
</comment>
<comment type="similarity">
    <text evidence="2">Belongs to the metallo-beta-lactamase superfamily.</text>
</comment>
<name>AHLL_BACTA</name>
<evidence type="ECO:0000250" key="1">
    <source>
        <dbReference type="UniProtKB" id="Q7B8B9"/>
    </source>
</evidence>
<evidence type="ECO:0000305" key="2"/>
<evidence type="ECO:0000312" key="3">
    <source>
        <dbReference type="EMBL" id="AAM92126.1"/>
    </source>
</evidence>
<proteinExistence type="inferred from homology"/>
<organism>
    <name type="scientific">Bacillus thuringiensis subsp. aizawai</name>
    <dbReference type="NCBI Taxonomy" id="1433"/>
    <lineage>
        <taxon>Bacteria</taxon>
        <taxon>Bacillati</taxon>
        <taxon>Bacillota</taxon>
        <taxon>Bacilli</taxon>
        <taxon>Bacillales</taxon>
        <taxon>Bacillaceae</taxon>
        <taxon>Bacillus</taxon>
        <taxon>Bacillus cereus group</taxon>
    </lineage>
</organism>
<feature type="chain" id="PRO_0000403301" description="N-acyl homoserine lactonase">
    <location>
        <begin position="1"/>
        <end position="250"/>
    </location>
</feature>
<feature type="binding site" evidence="1">
    <location>
        <position position="104"/>
    </location>
    <ligand>
        <name>Zn(2+)</name>
        <dbReference type="ChEBI" id="CHEBI:29105"/>
        <label>1</label>
    </ligand>
</feature>
<feature type="binding site" evidence="1">
    <location>
        <position position="106"/>
    </location>
    <ligand>
        <name>Zn(2+)</name>
        <dbReference type="ChEBI" id="CHEBI:29105"/>
        <label>1</label>
    </ligand>
</feature>
<feature type="binding site" evidence="1">
    <location>
        <position position="108"/>
    </location>
    <ligand>
        <name>Zn(2+)</name>
        <dbReference type="ChEBI" id="CHEBI:29105"/>
        <label>2</label>
    </ligand>
</feature>
<feature type="binding site" evidence="1">
    <location>
        <position position="109"/>
    </location>
    <ligand>
        <name>Zn(2+)</name>
        <dbReference type="ChEBI" id="CHEBI:29105"/>
        <label>2</label>
    </ligand>
</feature>
<feature type="binding site" evidence="1">
    <location>
        <position position="169"/>
    </location>
    <ligand>
        <name>Zn(2+)</name>
        <dbReference type="ChEBI" id="CHEBI:29105"/>
        <label>1</label>
    </ligand>
</feature>
<feature type="binding site" evidence="1">
    <location>
        <position position="191"/>
    </location>
    <ligand>
        <name>Zn(2+)</name>
        <dbReference type="ChEBI" id="CHEBI:29105"/>
        <label>1</label>
    </ligand>
</feature>
<feature type="binding site" evidence="1">
    <location>
        <position position="191"/>
    </location>
    <ligand>
        <name>Zn(2+)</name>
        <dbReference type="ChEBI" id="CHEBI:29105"/>
        <label>2</label>
    </ligand>
</feature>
<feature type="binding site" evidence="1">
    <location>
        <position position="235"/>
    </location>
    <ligand>
        <name>Zn(2+)</name>
        <dbReference type="ChEBI" id="CHEBI:29105"/>
        <label>2</label>
    </ligand>
</feature>
<keyword id="KW-0378">Hydrolase</keyword>
<keyword id="KW-0479">Metal-binding</keyword>
<keyword id="KW-0862">Zinc</keyword>
<dbReference type="EC" id="3.1.1.81"/>
<dbReference type="EMBL" id="AF478045">
    <property type="protein sequence ID" value="AAM92126.1"/>
    <property type="molecule type" value="Genomic_DNA"/>
</dbReference>
<dbReference type="RefSeq" id="WP_000216581.1">
    <property type="nucleotide sequence ID" value="NZ_NFEV01000078.1"/>
</dbReference>
<dbReference type="SMR" id="Q7B8C5"/>
<dbReference type="BRENDA" id="3.1.1.81">
    <property type="organism ID" value="711"/>
</dbReference>
<dbReference type="GO" id="GO:0102007">
    <property type="term" value="F:acyl-L-homoserine-lactone lactonohydrolase activity"/>
    <property type="evidence" value="ECO:0007669"/>
    <property type="project" value="UniProtKB-EC"/>
</dbReference>
<dbReference type="GO" id="GO:0046872">
    <property type="term" value="F:metal ion binding"/>
    <property type="evidence" value="ECO:0007669"/>
    <property type="project" value="UniProtKB-KW"/>
</dbReference>
<dbReference type="CDD" id="cd07729">
    <property type="entry name" value="AHL_lactonase_MBL-fold"/>
    <property type="match status" value="1"/>
</dbReference>
<dbReference type="FunFam" id="3.60.15.10:FF:000060">
    <property type="entry name" value="N-acyl homoserine lactonase AiiA"/>
    <property type="match status" value="1"/>
</dbReference>
<dbReference type="Gene3D" id="3.60.15.10">
    <property type="entry name" value="Ribonuclease Z/Hydroxyacylglutathione hydrolase-like"/>
    <property type="match status" value="1"/>
</dbReference>
<dbReference type="InterPro" id="IPR054870">
    <property type="entry name" value="AHLLactAiiA"/>
</dbReference>
<dbReference type="InterPro" id="IPR051013">
    <property type="entry name" value="MBL_superfamily_lactonases"/>
</dbReference>
<dbReference type="InterPro" id="IPR001279">
    <property type="entry name" value="Metallo-B-lactamas"/>
</dbReference>
<dbReference type="InterPro" id="IPR036866">
    <property type="entry name" value="RibonucZ/Hydroxyglut_hydro"/>
</dbReference>
<dbReference type="NCBIfam" id="NF045699">
    <property type="entry name" value="AHLLactAiiA"/>
    <property type="match status" value="1"/>
</dbReference>
<dbReference type="PANTHER" id="PTHR42978:SF7">
    <property type="entry name" value="METALLO-HYDROLASE RV2300C-RELATED"/>
    <property type="match status" value="1"/>
</dbReference>
<dbReference type="PANTHER" id="PTHR42978">
    <property type="entry name" value="QUORUM-QUENCHING LACTONASE YTNP-RELATED-RELATED"/>
    <property type="match status" value="1"/>
</dbReference>
<dbReference type="Pfam" id="PF00753">
    <property type="entry name" value="Lactamase_B"/>
    <property type="match status" value="1"/>
</dbReference>
<dbReference type="SMART" id="SM00849">
    <property type="entry name" value="Lactamase_B"/>
    <property type="match status" value="1"/>
</dbReference>
<dbReference type="SUPFAM" id="SSF56281">
    <property type="entry name" value="Metallo-hydrolase/oxidoreductase"/>
    <property type="match status" value="1"/>
</dbReference>
<sequence length="250" mass="28220">MTVKKLYFIPAGRCMLDHSSVNSALTPGKLLNLPVWCYLLETEEGPILVDTGMPESAVNNEGLFNGTFVEGQILPKMTEEDRIVNILKRVGYEPDDLLYIISSHLHFDHAGGNGAFTNTPIIVQRTEYEAALHREEYMKECILPHLNYKIIEGDYEVVPGVQLLYTPGHSPGHQSLFIETEQSGSVLLTIDASYTKENFEDEVPFAGFDPELALSSIKRLKEVVKKEKPIIFFGHDIEQEKSCRVFPEYI</sequence>
<reference evidence="3" key="1">
    <citation type="journal article" date="2002" name="Appl. Environ. Microbiol.">
        <title>Genes encoding the N-acyl homoserine lactone-degrading enzyme are widespread in many subspecies of Bacillus thuringiensis.</title>
        <authorList>
            <person name="Lee S.J."/>
            <person name="Park S.Y."/>
            <person name="Lee J.J."/>
            <person name="Yum D.Y."/>
            <person name="Koo B.T."/>
            <person name="Lee J.K."/>
        </authorList>
    </citation>
    <scope>NUCLEOTIDE SEQUENCE [GENOMIC DNA]</scope>
    <source>
        <strain evidence="3">HD-11 / T07 001</strain>
    </source>
</reference>
<accession>Q7B8C5</accession>
<protein>
    <recommendedName>
        <fullName evidence="1">N-acyl homoserine lactonase</fullName>
        <shortName evidence="1">AHL-lactonase</shortName>
        <ecNumber>3.1.1.81</ecNumber>
    </recommendedName>
</protein>